<name>RBL1B_NITHX</name>
<protein>
    <recommendedName>
        <fullName evidence="1">Ribulose bisphosphate carboxylase large chain 2</fullName>
        <shortName evidence="1">RuBisCO large subunit 2</shortName>
        <ecNumber evidence="1">4.1.1.39</ecNumber>
    </recommendedName>
</protein>
<geneLocation type="plasmid">
    <name>1</name>
</geneLocation>
<proteinExistence type="inferred from homology"/>
<keyword id="KW-0113">Calvin cycle</keyword>
<keyword id="KW-0120">Carbon dioxide fixation</keyword>
<keyword id="KW-0456">Lyase</keyword>
<keyword id="KW-0460">Magnesium</keyword>
<keyword id="KW-0479">Metal-binding</keyword>
<keyword id="KW-0503">Monooxygenase</keyword>
<keyword id="KW-0560">Oxidoreductase</keyword>
<keyword id="KW-0614">Plasmid</keyword>
<keyword id="KW-1185">Reference proteome</keyword>
<comment type="function">
    <text evidence="1">RuBisCO catalyzes two reactions: the carboxylation of D-ribulose 1,5-bisphosphate, the primary event in carbon dioxide fixation, as well as the oxidative fragmentation of the pentose substrate. Both reactions occur simultaneously and in competition at the same active site.</text>
</comment>
<comment type="catalytic activity">
    <reaction evidence="1">
        <text>2 (2R)-3-phosphoglycerate + 2 H(+) = D-ribulose 1,5-bisphosphate + CO2 + H2O</text>
        <dbReference type="Rhea" id="RHEA:23124"/>
        <dbReference type="ChEBI" id="CHEBI:15377"/>
        <dbReference type="ChEBI" id="CHEBI:15378"/>
        <dbReference type="ChEBI" id="CHEBI:16526"/>
        <dbReference type="ChEBI" id="CHEBI:57870"/>
        <dbReference type="ChEBI" id="CHEBI:58272"/>
        <dbReference type="EC" id="4.1.1.39"/>
    </reaction>
</comment>
<comment type="catalytic activity">
    <reaction evidence="1">
        <text>D-ribulose 1,5-bisphosphate + O2 = 2-phosphoglycolate + (2R)-3-phosphoglycerate + 2 H(+)</text>
        <dbReference type="Rhea" id="RHEA:36631"/>
        <dbReference type="ChEBI" id="CHEBI:15378"/>
        <dbReference type="ChEBI" id="CHEBI:15379"/>
        <dbReference type="ChEBI" id="CHEBI:57870"/>
        <dbReference type="ChEBI" id="CHEBI:58033"/>
        <dbReference type="ChEBI" id="CHEBI:58272"/>
    </reaction>
</comment>
<comment type="cofactor">
    <cofactor evidence="1">
        <name>Mg(2+)</name>
        <dbReference type="ChEBI" id="CHEBI:18420"/>
    </cofactor>
    <text evidence="1">Binds 1 Mg(2+) ion per subunit.</text>
</comment>
<comment type="subunit">
    <text evidence="1">Heterohexadecamer of 8 large chains and 8 small chains.</text>
</comment>
<comment type="miscellaneous">
    <text evidence="1">The basic functional RuBisCO is composed of a large chain homodimer in a 'head-to-tail' conformation. In form I RuBisCO this homodimer is arranged in a barrel-like tetramer with the small subunits forming a tetrameric 'cap' on each end of the 'barrel'.</text>
</comment>
<comment type="similarity">
    <text evidence="1">Belongs to the RuBisCO large chain family. Type I subfamily.</text>
</comment>
<accession>Q1QGD4</accession>
<gene>
    <name evidence="1" type="primary">cbbL2</name>
    <name type="ordered locus">Nham_4049</name>
</gene>
<sequence>MNVLNEKSLTVRGKDRYKSGVMSYKKMGYWEPDYTPKDTDIICLFRVTPQDGVDPIEAAAAVAGESSTATWTVVWTDRLTAAEKYRAKCYRVDPVPGAEGQYFAYIAYDLDLFEPGSISNLTASVIGNVFGFKPLKALRLEDMRLPVAYVKTFKGPPTGIVVERERLDKFGRPLLGATVKPKLGLSGRNYGRVVYEALKGGLDFTKDDENINSQPFMHWRERFLYCMEAVNRAQAATGEIKGSYLNVTAATMEDMYERAEFAKELGSVVVMIDLVIGYTAIQSMSNWARKNDMILHLHRAGHSTYTRQRNHGVSFRVISKWMRLAGVDHIHAGTVVGKLEGDPLTTRGYYDICREEHNPMQLEHGIFFDQNWASLNKMMPVASGGIHAGQMHQLIQHLGEDVVLQFGGGTIGHPMGIQAGATANRVALEAMILARNEGRDYVSEGPDILAKAAASCTPLKQALEVWKDVTFNYQSTDAPDYVTTPAVA</sequence>
<evidence type="ECO:0000255" key="1">
    <source>
        <dbReference type="HAMAP-Rule" id="MF_01338"/>
    </source>
</evidence>
<reference key="1">
    <citation type="submission" date="2006-03" db="EMBL/GenBank/DDBJ databases">
        <title>Complete sequence of plasmid 1 of Nitrobacter hamburgensis X14.</title>
        <authorList>
            <consortium name="US DOE Joint Genome Institute"/>
            <person name="Copeland A."/>
            <person name="Lucas S."/>
            <person name="Lapidus A."/>
            <person name="Barry K."/>
            <person name="Detter J.C."/>
            <person name="Glavina del Rio T."/>
            <person name="Hammon N."/>
            <person name="Israni S."/>
            <person name="Dalin E."/>
            <person name="Tice H."/>
            <person name="Pitluck S."/>
            <person name="Chain P."/>
            <person name="Malfatti S."/>
            <person name="Shin M."/>
            <person name="Vergez L."/>
            <person name="Schmutz J."/>
            <person name="Larimer F."/>
            <person name="Land M."/>
            <person name="Hauser L."/>
            <person name="Kyrpides N."/>
            <person name="Ivanova N."/>
            <person name="Ward B."/>
            <person name="Arp D."/>
            <person name="Klotz M."/>
            <person name="Stein L."/>
            <person name="O'Mullan G."/>
            <person name="Starkenburg S."/>
            <person name="Sayavedra L."/>
            <person name="Poret-Peterson A.T."/>
            <person name="Gentry M.E."/>
            <person name="Bruce D."/>
            <person name="Richardson P."/>
        </authorList>
    </citation>
    <scope>NUCLEOTIDE SEQUENCE [LARGE SCALE GENOMIC DNA]</scope>
    <source>
        <strain>DSM 10229 / NCIMB 13809 / X14</strain>
    </source>
</reference>
<feature type="chain" id="PRO_0000251447" description="Ribulose bisphosphate carboxylase large chain 2">
    <location>
        <begin position="1"/>
        <end position="488"/>
    </location>
</feature>
<feature type="active site" description="Proton acceptor" evidence="1">
    <location>
        <position position="180"/>
    </location>
</feature>
<feature type="active site" description="Proton acceptor" evidence="1">
    <location>
        <position position="298"/>
    </location>
</feature>
<feature type="binding site" description="in homodimeric partner" evidence="1">
    <location>
        <position position="128"/>
    </location>
    <ligand>
        <name>substrate</name>
    </ligand>
</feature>
<feature type="binding site" evidence="1">
    <location>
        <position position="178"/>
    </location>
    <ligand>
        <name>substrate</name>
    </ligand>
</feature>
<feature type="binding site" evidence="1">
    <location>
        <position position="182"/>
    </location>
    <ligand>
        <name>substrate</name>
    </ligand>
</feature>
<feature type="binding site" description="via carbamate group" evidence="1">
    <location>
        <position position="206"/>
    </location>
    <ligand>
        <name>Mg(2+)</name>
        <dbReference type="ChEBI" id="CHEBI:18420"/>
    </ligand>
</feature>
<feature type="binding site" evidence="1">
    <location>
        <position position="208"/>
    </location>
    <ligand>
        <name>Mg(2+)</name>
        <dbReference type="ChEBI" id="CHEBI:18420"/>
    </ligand>
</feature>
<feature type="binding site" evidence="1">
    <location>
        <position position="209"/>
    </location>
    <ligand>
        <name>Mg(2+)</name>
        <dbReference type="ChEBI" id="CHEBI:18420"/>
    </ligand>
</feature>
<feature type="binding site" evidence="1">
    <location>
        <position position="299"/>
    </location>
    <ligand>
        <name>substrate</name>
    </ligand>
</feature>
<feature type="binding site" evidence="1">
    <location>
        <position position="331"/>
    </location>
    <ligand>
        <name>substrate</name>
    </ligand>
</feature>
<feature type="binding site" evidence="1">
    <location>
        <position position="383"/>
    </location>
    <ligand>
        <name>substrate</name>
    </ligand>
</feature>
<feature type="site" description="Transition state stabilizer" evidence="1">
    <location>
        <position position="338"/>
    </location>
</feature>
<feature type="modified residue" description="N6-carboxylysine" evidence="1">
    <location>
        <position position="206"/>
    </location>
</feature>
<dbReference type="EC" id="4.1.1.39" evidence="1"/>
<dbReference type="EMBL" id="CP000320">
    <property type="protein sequence ID" value="ABE64713.1"/>
    <property type="molecule type" value="Genomic_DNA"/>
</dbReference>
<dbReference type="RefSeq" id="WP_011505022.1">
    <property type="nucleotide sequence ID" value="NC_007959.1"/>
</dbReference>
<dbReference type="SMR" id="Q1QGD4"/>
<dbReference type="KEGG" id="nha:Nham_4049"/>
<dbReference type="HOGENOM" id="CLU_031450_2_0_5"/>
<dbReference type="OrthoDB" id="9764279at2"/>
<dbReference type="Proteomes" id="UP000001953">
    <property type="component" value="Plasmid pNITHX1"/>
</dbReference>
<dbReference type="GO" id="GO:0000287">
    <property type="term" value="F:magnesium ion binding"/>
    <property type="evidence" value="ECO:0007669"/>
    <property type="project" value="UniProtKB-UniRule"/>
</dbReference>
<dbReference type="GO" id="GO:0004497">
    <property type="term" value="F:monooxygenase activity"/>
    <property type="evidence" value="ECO:0007669"/>
    <property type="project" value="UniProtKB-KW"/>
</dbReference>
<dbReference type="GO" id="GO:0016984">
    <property type="term" value="F:ribulose-bisphosphate carboxylase activity"/>
    <property type="evidence" value="ECO:0007669"/>
    <property type="project" value="UniProtKB-UniRule"/>
</dbReference>
<dbReference type="GO" id="GO:0019253">
    <property type="term" value="P:reductive pentose-phosphate cycle"/>
    <property type="evidence" value="ECO:0007669"/>
    <property type="project" value="UniProtKB-UniRule"/>
</dbReference>
<dbReference type="CDD" id="cd08212">
    <property type="entry name" value="RuBisCO_large_I"/>
    <property type="match status" value="1"/>
</dbReference>
<dbReference type="Gene3D" id="3.20.20.110">
    <property type="entry name" value="Ribulose bisphosphate carboxylase, large subunit, C-terminal domain"/>
    <property type="match status" value="1"/>
</dbReference>
<dbReference type="Gene3D" id="3.30.70.150">
    <property type="entry name" value="RuBisCO large subunit, N-terminal domain"/>
    <property type="match status" value="1"/>
</dbReference>
<dbReference type="HAMAP" id="MF_01338">
    <property type="entry name" value="RuBisCO_L_type1"/>
    <property type="match status" value="1"/>
</dbReference>
<dbReference type="InterPro" id="IPR033966">
    <property type="entry name" value="RuBisCO"/>
</dbReference>
<dbReference type="InterPro" id="IPR020878">
    <property type="entry name" value="RuBisCo_large_chain_AS"/>
</dbReference>
<dbReference type="InterPro" id="IPR000685">
    <property type="entry name" value="RuBisCO_lsu_C"/>
</dbReference>
<dbReference type="InterPro" id="IPR036376">
    <property type="entry name" value="RuBisCO_lsu_C_sf"/>
</dbReference>
<dbReference type="InterPro" id="IPR017443">
    <property type="entry name" value="RuBisCO_lsu_fd_N"/>
</dbReference>
<dbReference type="InterPro" id="IPR036422">
    <property type="entry name" value="RuBisCO_lsu_N_sf"/>
</dbReference>
<dbReference type="InterPro" id="IPR020888">
    <property type="entry name" value="RuBisCO_lsuI"/>
</dbReference>
<dbReference type="NCBIfam" id="NF003252">
    <property type="entry name" value="PRK04208.1"/>
    <property type="match status" value="1"/>
</dbReference>
<dbReference type="PANTHER" id="PTHR42704">
    <property type="entry name" value="RIBULOSE BISPHOSPHATE CARBOXYLASE"/>
    <property type="match status" value="1"/>
</dbReference>
<dbReference type="PANTHER" id="PTHR42704:SF17">
    <property type="entry name" value="RIBULOSE BISPHOSPHATE CARBOXYLASE LARGE CHAIN"/>
    <property type="match status" value="1"/>
</dbReference>
<dbReference type="Pfam" id="PF00016">
    <property type="entry name" value="RuBisCO_large"/>
    <property type="match status" value="1"/>
</dbReference>
<dbReference type="Pfam" id="PF02788">
    <property type="entry name" value="RuBisCO_large_N"/>
    <property type="match status" value="1"/>
</dbReference>
<dbReference type="SFLD" id="SFLDG01052">
    <property type="entry name" value="RuBisCO"/>
    <property type="match status" value="1"/>
</dbReference>
<dbReference type="SFLD" id="SFLDS00014">
    <property type="entry name" value="RuBisCO"/>
    <property type="match status" value="1"/>
</dbReference>
<dbReference type="SFLD" id="SFLDG00301">
    <property type="entry name" value="RuBisCO-like_proteins"/>
    <property type="match status" value="1"/>
</dbReference>
<dbReference type="SUPFAM" id="SSF51649">
    <property type="entry name" value="RuBisCo, C-terminal domain"/>
    <property type="match status" value="1"/>
</dbReference>
<dbReference type="SUPFAM" id="SSF54966">
    <property type="entry name" value="RuBisCO, large subunit, small (N-terminal) domain"/>
    <property type="match status" value="1"/>
</dbReference>
<dbReference type="PROSITE" id="PS00157">
    <property type="entry name" value="RUBISCO_LARGE"/>
    <property type="match status" value="1"/>
</dbReference>
<organism>
    <name type="scientific">Nitrobacter hamburgensis (strain DSM 10229 / NCIMB 13809 / X14)</name>
    <dbReference type="NCBI Taxonomy" id="323097"/>
    <lineage>
        <taxon>Bacteria</taxon>
        <taxon>Pseudomonadati</taxon>
        <taxon>Pseudomonadota</taxon>
        <taxon>Alphaproteobacteria</taxon>
        <taxon>Hyphomicrobiales</taxon>
        <taxon>Nitrobacteraceae</taxon>
        <taxon>Nitrobacter</taxon>
    </lineage>
</organism>